<name>RS16_PROMS</name>
<organism>
    <name type="scientific">Prochlorococcus marinus (strain AS9601)</name>
    <dbReference type="NCBI Taxonomy" id="146891"/>
    <lineage>
        <taxon>Bacteria</taxon>
        <taxon>Bacillati</taxon>
        <taxon>Cyanobacteriota</taxon>
        <taxon>Cyanophyceae</taxon>
        <taxon>Synechococcales</taxon>
        <taxon>Prochlorococcaceae</taxon>
        <taxon>Prochlorococcus</taxon>
    </lineage>
</organism>
<comment type="similarity">
    <text evidence="1">Belongs to the bacterial ribosomal protein bS16 family.</text>
</comment>
<evidence type="ECO:0000255" key="1">
    <source>
        <dbReference type="HAMAP-Rule" id="MF_00385"/>
    </source>
</evidence>
<evidence type="ECO:0000256" key="2">
    <source>
        <dbReference type="SAM" id="MobiDB-lite"/>
    </source>
</evidence>
<evidence type="ECO:0000305" key="3"/>
<feature type="chain" id="PRO_1000049317" description="Small ribosomal subunit protein bS16">
    <location>
        <begin position="1"/>
        <end position="121"/>
    </location>
</feature>
<feature type="region of interest" description="Disordered" evidence="2">
    <location>
        <begin position="97"/>
        <end position="121"/>
    </location>
</feature>
<feature type="compositionally biased region" description="Basic and acidic residues" evidence="2">
    <location>
        <begin position="97"/>
        <end position="114"/>
    </location>
</feature>
<sequence>MIKLRLKRFGKKKEASFRIVACNSTSRRDGRPLQELGFYNPRTKETRLDTEALRTRLTQGAQPTDVVRTLLEKGGLLEKTERPSIAIGKAKLEKEKLAKAKTKDEENDNSKVESEGNEAES</sequence>
<keyword id="KW-0687">Ribonucleoprotein</keyword>
<keyword id="KW-0689">Ribosomal protein</keyword>
<protein>
    <recommendedName>
        <fullName evidence="1">Small ribosomal subunit protein bS16</fullName>
    </recommendedName>
    <alternativeName>
        <fullName evidence="3">30S ribosomal protein S16</fullName>
    </alternativeName>
</protein>
<dbReference type="EMBL" id="CP000551">
    <property type="protein sequence ID" value="ABM70767.1"/>
    <property type="molecule type" value="Genomic_DNA"/>
</dbReference>
<dbReference type="RefSeq" id="WP_011818903.1">
    <property type="nucleotide sequence ID" value="NC_008816.1"/>
</dbReference>
<dbReference type="SMR" id="A2BSK6"/>
<dbReference type="STRING" id="146891.A9601_14841"/>
<dbReference type="KEGG" id="pmb:A9601_14841"/>
<dbReference type="eggNOG" id="COG0228">
    <property type="taxonomic scope" value="Bacteria"/>
</dbReference>
<dbReference type="HOGENOM" id="CLU_100590_3_2_3"/>
<dbReference type="OrthoDB" id="9807878at2"/>
<dbReference type="Proteomes" id="UP000002590">
    <property type="component" value="Chromosome"/>
</dbReference>
<dbReference type="GO" id="GO:0005737">
    <property type="term" value="C:cytoplasm"/>
    <property type="evidence" value="ECO:0007669"/>
    <property type="project" value="UniProtKB-ARBA"/>
</dbReference>
<dbReference type="GO" id="GO:0015935">
    <property type="term" value="C:small ribosomal subunit"/>
    <property type="evidence" value="ECO:0007669"/>
    <property type="project" value="TreeGrafter"/>
</dbReference>
<dbReference type="GO" id="GO:0003735">
    <property type="term" value="F:structural constituent of ribosome"/>
    <property type="evidence" value="ECO:0007669"/>
    <property type="project" value="InterPro"/>
</dbReference>
<dbReference type="GO" id="GO:0006412">
    <property type="term" value="P:translation"/>
    <property type="evidence" value="ECO:0007669"/>
    <property type="project" value="UniProtKB-UniRule"/>
</dbReference>
<dbReference type="Gene3D" id="3.30.1320.10">
    <property type="match status" value="1"/>
</dbReference>
<dbReference type="HAMAP" id="MF_00385">
    <property type="entry name" value="Ribosomal_bS16"/>
    <property type="match status" value="1"/>
</dbReference>
<dbReference type="InterPro" id="IPR000307">
    <property type="entry name" value="Ribosomal_bS16"/>
</dbReference>
<dbReference type="InterPro" id="IPR020592">
    <property type="entry name" value="Ribosomal_bS16_CS"/>
</dbReference>
<dbReference type="InterPro" id="IPR023803">
    <property type="entry name" value="Ribosomal_bS16_dom_sf"/>
</dbReference>
<dbReference type="NCBIfam" id="TIGR00002">
    <property type="entry name" value="S16"/>
    <property type="match status" value="1"/>
</dbReference>
<dbReference type="PANTHER" id="PTHR12919">
    <property type="entry name" value="30S RIBOSOMAL PROTEIN S16"/>
    <property type="match status" value="1"/>
</dbReference>
<dbReference type="PANTHER" id="PTHR12919:SF20">
    <property type="entry name" value="SMALL RIBOSOMAL SUBUNIT PROTEIN BS16M"/>
    <property type="match status" value="1"/>
</dbReference>
<dbReference type="Pfam" id="PF00886">
    <property type="entry name" value="Ribosomal_S16"/>
    <property type="match status" value="1"/>
</dbReference>
<dbReference type="SUPFAM" id="SSF54565">
    <property type="entry name" value="Ribosomal protein S16"/>
    <property type="match status" value="1"/>
</dbReference>
<dbReference type="PROSITE" id="PS00732">
    <property type="entry name" value="RIBOSOMAL_S16"/>
    <property type="match status" value="1"/>
</dbReference>
<gene>
    <name evidence="1" type="primary">rpsP</name>
    <name evidence="1" type="synonym">rps16</name>
    <name type="ordered locus">A9601_14841</name>
</gene>
<reference key="1">
    <citation type="journal article" date="2007" name="PLoS Genet.">
        <title>Patterns and implications of gene gain and loss in the evolution of Prochlorococcus.</title>
        <authorList>
            <person name="Kettler G.C."/>
            <person name="Martiny A.C."/>
            <person name="Huang K."/>
            <person name="Zucker J."/>
            <person name="Coleman M.L."/>
            <person name="Rodrigue S."/>
            <person name="Chen F."/>
            <person name="Lapidus A."/>
            <person name="Ferriera S."/>
            <person name="Johnson J."/>
            <person name="Steglich C."/>
            <person name="Church G.M."/>
            <person name="Richardson P."/>
            <person name="Chisholm S.W."/>
        </authorList>
    </citation>
    <scope>NUCLEOTIDE SEQUENCE [LARGE SCALE GENOMIC DNA]</scope>
    <source>
        <strain>AS9601</strain>
    </source>
</reference>
<proteinExistence type="inferred from homology"/>
<accession>A2BSK6</accession>